<dbReference type="EMBL" id="X92587">
    <property type="protein sequence ID" value="CAA63324.1"/>
    <property type="molecule type" value="Genomic_DNA"/>
</dbReference>
<dbReference type="EMBL" id="U82598">
    <property type="protein sequence ID" value="AAB40747.1"/>
    <property type="molecule type" value="Genomic_DNA"/>
</dbReference>
<dbReference type="EMBL" id="U00096">
    <property type="protein sequence ID" value="AAC73652.1"/>
    <property type="molecule type" value="Genomic_DNA"/>
</dbReference>
<dbReference type="EMBL" id="AP009048">
    <property type="protein sequence ID" value="BAE76327.1"/>
    <property type="molecule type" value="Genomic_DNA"/>
</dbReference>
<dbReference type="PIR" id="S66593">
    <property type="entry name" value="S66593"/>
</dbReference>
<dbReference type="RefSeq" id="NP_415083.1">
    <property type="nucleotide sequence ID" value="NC_000913.3"/>
</dbReference>
<dbReference type="RefSeq" id="WP_001204791.1">
    <property type="nucleotide sequence ID" value="NZ_LN832404.1"/>
</dbReference>
<dbReference type="SMR" id="Q47274"/>
<dbReference type="BioGRID" id="4260894">
    <property type="interactions" value="134"/>
</dbReference>
<dbReference type="BioGRID" id="849563">
    <property type="interactions" value="2"/>
</dbReference>
<dbReference type="FunCoup" id="Q47274">
    <property type="interactions" value="68"/>
</dbReference>
<dbReference type="IntAct" id="Q47274">
    <property type="interactions" value="4"/>
</dbReference>
<dbReference type="STRING" id="511145.b0551"/>
<dbReference type="PaxDb" id="511145-b0551"/>
<dbReference type="EnsemblBacteria" id="AAC73652">
    <property type="protein sequence ID" value="AAC73652"/>
    <property type="gene ID" value="b0551"/>
</dbReference>
<dbReference type="GeneID" id="93774787"/>
<dbReference type="GeneID" id="945177"/>
<dbReference type="KEGG" id="ecj:JW0539"/>
<dbReference type="KEGG" id="eco:b0551"/>
<dbReference type="KEGG" id="ecoc:C3026_02720"/>
<dbReference type="PATRIC" id="fig|1411691.4.peg.1725"/>
<dbReference type="EchoBASE" id="EB3397"/>
<dbReference type="eggNOG" id="ENOG502ZQA6">
    <property type="taxonomic scope" value="Bacteria"/>
</dbReference>
<dbReference type="HOGENOM" id="CLU_129825_0_0_6"/>
<dbReference type="InParanoid" id="Q47274"/>
<dbReference type="OMA" id="MCDIQMV"/>
<dbReference type="OrthoDB" id="6432617at2"/>
<dbReference type="PhylomeDB" id="Q47274"/>
<dbReference type="BioCyc" id="EcoCyc:G6307-MONOMER"/>
<dbReference type="PRO" id="PR:Q47274"/>
<dbReference type="Proteomes" id="UP000000625">
    <property type="component" value="Chromosome"/>
</dbReference>
<dbReference type="GO" id="GO:0003677">
    <property type="term" value="F:DNA binding"/>
    <property type="evidence" value="ECO:0000314"/>
    <property type="project" value="EcoCyc"/>
</dbReference>
<dbReference type="GO" id="GO:0044010">
    <property type="term" value="P:single-species biofilm formation"/>
    <property type="evidence" value="ECO:0000315"/>
    <property type="project" value="EcoCyc"/>
</dbReference>
<dbReference type="GO" id="GO:0031564">
    <property type="term" value="P:transcription antitermination"/>
    <property type="evidence" value="ECO:0007669"/>
    <property type="project" value="UniProtKB-KW"/>
</dbReference>
<dbReference type="InterPro" id="IPR010534">
    <property type="entry name" value="Phage_933W_GpQ"/>
</dbReference>
<dbReference type="Pfam" id="PF06530">
    <property type="entry name" value="Phage_antitermQ"/>
    <property type="match status" value="1"/>
</dbReference>
<gene>
    <name type="primary">quuD</name>
    <name type="synonym">ybcQ</name>
    <name type="ordered locus">b0551</name>
    <name type="ordered locus">JW0539</name>
</gene>
<comment type="function">
    <text evidence="1">Positively regulate expression of some phage genes. Bacterial host RNA polymerase modified by antitermination proteins transcribes through termination sites that otherwise prevent expression of the regulated genes (By similarity).</text>
</comment>
<comment type="miscellaneous">
    <text>Encoded by the cryptic lambdoid prophage DLP12.</text>
</comment>
<comment type="similarity">
    <text evidence="2">Belongs to the phage antitermination Q type 1 family.</text>
</comment>
<feature type="chain" id="PRO_0000073891" description="Prophage antitermination protein Q homolog QuuD">
    <location>
        <begin position="1"/>
        <end position="127"/>
    </location>
</feature>
<reference key="1">
    <citation type="journal article" date="1996" name="J. Mol. Biol.">
        <title>Holliday junction resolvases encoded by homologous rusA genes in Escherichia coli K-12 and phage 82.</title>
        <authorList>
            <person name="Mahdi A.A."/>
            <person name="Sharples G.J."/>
            <person name="Mandal T.N."/>
            <person name="Lloyd R.G."/>
        </authorList>
    </citation>
    <scope>NUCLEOTIDE SEQUENCE [GENOMIC DNA]</scope>
    <source>
        <strain>K12</strain>
    </source>
</reference>
<reference key="2">
    <citation type="submission" date="1997-01" db="EMBL/GenBank/DDBJ databases">
        <title>Sequence of minutes 4-25 of Escherichia coli.</title>
        <authorList>
            <person name="Chung E."/>
            <person name="Allen E."/>
            <person name="Araujo R."/>
            <person name="Aparicio A.M."/>
            <person name="Davis K."/>
            <person name="Duncan M."/>
            <person name="Federspiel N."/>
            <person name="Hyman R."/>
            <person name="Kalman S."/>
            <person name="Komp C."/>
            <person name="Kurdi O."/>
            <person name="Lew H."/>
            <person name="Lin D."/>
            <person name="Namath A."/>
            <person name="Oefner P."/>
            <person name="Roberts D."/>
            <person name="Schramm S."/>
            <person name="Davis R.W."/>
        </authorList>
    </citation>
    <scope>NUCLEOTIDE SEQUENCE [LARGE SCALE GENOMIC DNA]</scope>
    <source>
        <strain>K12 / MG1655 / ATCC 47076</strain>
    </source>
</reference>
<reference key="3">
    <citation type="journal article" date="1997" name="Science">
        <title>The complete genome sequence of Escherichia coli K-12.</title>
        <authorList>
            <person name="Blattner F.R."/>
            <person name="Plunkett G. III"/>
            <person name="Bloch C.A."/>
            <person name="Perna N.T."/>
            <person name="Burland V."/>
            <person name="Riley M."/>
            <person name="Collado-Vides J."/>
            <person name="Glasner J.D."/>
            <person name="Rode C.K."/>
            <person name="Mayhew G.F."/>
            <person name="Gregor J."/>
            <person name="Davis N.W."/>
            <person name="Kirkpatrick H.A."/>
            <person name="Goeden M.A."/>
            <person name="Rose D.J."/>
            <person name="Mau B."/>
            <person name="Shao Y."/>
        </authorList>
    </citation>
    <scope>NUCLEOTIDE SEQUENCE [LARGE SCALE GENOMIC DNA]</scope>
    <source>
        <strain>K12 / MG1655 / ATCC 47076</strain>
    </source>
</reference>
<reference key="4">
    <citation type="journal article" date="2006" name="Mol. Syst. Biol.">
        <title>Highly accurate genome sequences of Escherichia coli K-12 strains MG1655 and W3110.</title>
        <authorList>
            <person name="Hayashi K."/>
            <person name="Morooka N."/>
            <person name="Yamamoto Y."/>
            <person name="Fujita K."/>
            <person name="Isono K."/>
            <person name="Choi S."/>
            <person name="Ohtsubo E."/>
            <person name="Baba T."/>
            <person name="Wanner B.L."/>
            <person name="Mori H."/>
            <person name="Horiuchi T."/>
        </authorList>
    </citation>
    <scope>NUCLEOTIDE SEQUENCE [LARGE SCALE GENOMIC DNA]</scope>
    <source>
        <strain>K12 / W3110 / ATCC 27325 / DSM 5911</strain>
    </source>
</reference>
<protein>
    <recommendedName>
        <fullName evidence="2">Prophage antitermination protein Q homolog QuuD</fullName>
    </recommendedName>
    <alternativeName>
        <fullName>Antitermination protein Q homolog from lambdoid prophage DLP12</fullName>
    </alternativeName>
</protein>
<organism>
    <name type="scientific">Escherichia coli (strain K12)</name>
    <dbReference type="NCBI Taxonomy" id="83333"/>
    <lineage>
        <taxon>Bacteria</taxon>
        <taxon>Pseudomonadati</taxon>
        <taxon>Pseudomonadota</taxon>
        <taxon>Gammaproteobacteria</taxon>
        <taxon>Enterobacterales</taxon>
        <taxon>Enterobacteriaceae</taxon>
        <taxon>Escherichia</taxon>
    </lineage>
</organism>
<sequence length="127" mass="14176">MRDIQMVLERWGAWAANNHEDVTWSSIAAGFKGLITSKVKSRPQCCDDDAMIICGCMARLKKNNSDLHDLLVDYYVVGMTFMSLAGKHCCSDGYIGKRLQKAEGIIEGMLMALDIRLEMDIVVNNSN</sequence>
<proteinExistence type="inferred from homology"/>
<keyword id="KW-0238">DNA-binding</keyword>
<keyword id="KW-1185">Reference proteome</keyword>
<keyword id="KW-0804">Transcription</keyword>
<keyword id="KW-0889">Transcription antitermination</keyword>
<keyword id="KW-0805">Transcription regulation</keyword>
<name>REQ1_ECOLI</name>
<evidence type="ECO:0000250" key="1"/>
<evidence type="ECO:0000305" key="2"/>
<accession>Q47274</accession>
<accession>Q2MBM9</accession>